<name>YLAT2_HUMAN</name>
<protein>
    <recommendedName>
        <fullName evidence="18">Y+L amino acid transporter 2</fullName>
    </recommendedName>
    <alternativeName>
        <fullName>Cationic amino acid transporter, y+ system</fullName>
    </alternativeName>
    <alternativeName>
        <fullName>Solute carrier family 7 member 6</fullName>
    </alternativeName>
    <alternativeName>
        <fullName>y(+)L-type amino acid transporter 2</fullName>
        <shortName>Y+LAT2</shortName>
        <shortName>y+LAT-2</shortName>
    </alternativeName>
</protein>
<proteinExistence type="evidence at protein level"/>
<keyword id="KW-0029">Amino-acid transport</keyword>
<keyword id="KW-0050">Antiport</keyword>
<keyword id="KW-1003">Cell membrane</keyword>
<keyword id="KW-1015">Disulfide bond</keyword>
<keyword id="KW-0472">Membrane</keyword>
<keyword id="KW-0597">Phosphoprotein</keyword>
<keyword id="KW-1267">Proteomics identification</keyword>
<keyword id="KW-1185">Reference proteome</keyword>
<keyword id="KW-0812">Transmembrane</keyword>
<keyword id="KW-1133">Transmembrane helix</keyword>
<keyword id="KW-0813">Transport</keyword>
<dbReference type="EMBL" id="D87432">
    <property type="protein sequence ID" value="BAA13376.2"/>
    <property type="status" value="ALT_INIT"/>
    <property type="molecule type" value="mRNA"/>
</dbReference>
<dbReference type="EMBL" id="CR749291">
    <property type="protein sequence ID" value="CAH18146.1"/>
    <property type="molecule type" value="mRNA"/>
</dbReference>
<dbReference type="EMBL" id="CH471092">
    <property type="protein sequence ID" value="EAW83219.1"/>
    <property type="molecule type" value="Genomic_DNA"/>
</dbReference>
<dbReference type="EMBL" id="BC028216">
    <property type="protein sequence ID" value="AAH28216.1"/>
    <property type="molecule type" value="mRNA"/>
</dbReference>
<dbReference type="CCDS" id="CCDS32470.1"/>
<dbReference type="RefSeq" id="NP_001070253.1">
    <property type="nucleotide sequence ID" value="NM_001076785.3"/>
</dbReference>
<dbReference type="RefSeq" id="NP_003974.3">
    <property type="nucleotide sequence ID" value="NM_003983.6"/>
</dbReference>
<dbReference type="RefSeq" id="XP_011521735.1">
    <property type="nucleotide sequence ID" value="XM_011523433.1"/>
</dbReference>
<dbReference type="RefSeq" id="XP_011521736.1">
    <property type="nucleotide sequence ID" value="XM_011523434.1"/>
</dbReference>
<dbReference type="RefSeq" id="XP_011521740.1">
    <property type="nucleotide sequence ID" value="XM_011523438.1"/>
</dbReference>
<dbReference type="EMDB" id="EMD-30341"/>
<dbReference type="SMR" id="Q92536"/>
<dbReference type="BioGRID" id="114519">
    <property type="interactions" value="76"/>
</dbReference>
<dbReference type="ComplexPortal" id="CPX-8188">
    <property type="entry name" value="Y+LAT2-4F2 heteromeric amino acid transporter complex"/>
</dbReference>
<dbReference type="FunCoup" id="Q92536">
    <property type="interactions" value="211"/>
</dbReference>
<dbReference type="IntAct" id="Q92536">
    <property type="interactions" value="40"/>
</dbReference>
<dbReference type="STRING" id="9606.ENSP00000455064"/>
<dbReference type="DrugBank" id="DB00130">
    <property type="generic name" value="L-Glutamine"/>
</dbReference>
<dbReference type="TCDB" id="2.A.3.8.23">
    <property type="family name" value="the amino acid-polyamine-organocation (apc) family"/>
</dbReference>
<dbReference type="GlyGen" id="Q92536">
    <property type="glycosylation" value="2 sites, 1 N-linked glycan (1 site)"/>
</dbReference>
<dbReference type="iPTMnet" id="Q92536"/>
<dbReference type="PhosphoSitePlus" id="Q92536"/>
<dbReference type="SwissPalm" id="Q92536"/>
<dbReference type="BioMuta" id="SLC7A6"/>
<dbReference type="DMDM" id="190462822"/>
<dbReference type="jPOST" id="Q92536"/>
<dbReference type="MassIVE" id="Q92536"/>
<dbReference type="PaxDb" id="9606-ENSP00000455064"/>
<dbReference type="PeptideAtlas" id="Q92536"/>
<dbReference type="ProteomicsDB" id="75294"/>
<dbReference type="Pumba" id="Q92536"/>
<dbReference type="Antibodypedia" id="55124">
    <property type="antibodies" value="112 antibodies from 18 providers"/>
</dbReference>
<dbReference type="DNASU" id="9057"/>
<dbReference type="Ensembl" id="ENST00000219343.11">
    <property type="protein sequence ID" value="ENSP00000219343.6"/>
    <property type="gene ID" value="ENSG00000103064.15"/>
</dbReference>
<dbReference type="Ensembl" id="ENST00000566454.5">
    <property type="protein sequence ID" value="ENSP00000455064.1"/>
    <property type="gene ID" value="ENSG00000103064.15"/>
</dbReference>
<dbReference type="GeneID" id="9057"/>
<dbReference type="KEGG" id="hsa:9057"/>
<dbReference type="MANE-Select" id="ENST00000219343.11">
    <property type="protein sequence ID" value="ENSP00000219343.6"/>
    <property type="RefSeq nucleotide sequence ID" value="NM_003983.6"/>
    <property type="RefSeq protein sequence ID" value="NP_003974.3"/>
</dbReference>
<dbReference type="UCSC" id="uc002evt.3">
    <property type="organism name" value="human"/>
</dbReference>
<dbReference type="AGR" id="HGNC:11064"/>
<dbReference type="CTD" id="9057"/>
<dbReference type="DisGeNET" id="9057"/>
<dbReference type="GeneCards" id="SLC7A6"/>
<dbReference type="HGNC" id="HGNC:11064">
    <property type="gene designation" value="SLC7A6"/>
</dbReference>
<dbReference type="HPA" id="ENSG00000103064">
    <property type="expression patterns" value="Tissue enhanced (skeletal)"/>
</dbReference>
<dbReference type="MIM" id="605641">
    <property type="type" value="gene"/>
</dbReference>
<dbReference type="neXtProt" id="NX_Q92536"/>
<dbReference type="OpenTargets" id="ENSG00000103064"/>
<dbReference type="PharmGKB" id="PA35924"/>
<dbReference type="VEuPathDB" id="HostDB:ENSG00000103064"/>
<dbReference type="eggNOG" id="KOG1287">
    <property type="taxonomic scope" value="Eukaryota"/>
</dbReference>
<dbReference type="GeneTree" id="ENSGT00940000158295"/>
<dbReference type="HOGENOM" id="CLU_007946_3_0_1"/>
<dbReference type="InParanoid" id="Q92536"/>
<dbReference type="OMA" id="ISGMYFG"/>
<dbReference type="OrthoDB" id="10062876at2759"/>
<dbReference type="PAN-GO" id="Q92536">
    <property type="GO annotations" value="2 GO annotations based on evolutionary models"/>
</dbReference>
<dbReference type="PhylomeDB" id="Q92536"/>
<dbReference type="TreeFam" id="TF313355"/>
<dbReference type="BioCyc" id="MetaCyc:ENSG00000103064-MONOMER"/>
<dbReference type="PathwayCommons" id="Q92536"/>
<dbReference type="Reactome" id="R-HSA-210991">
    <property type="pathway name" value="Basigin interactions"/>
</dbReference>
<dbReference type="Reactome" id="R-HSA-352230">
    <property type="pathway name" value="Amino acid transport across the plasma membrane"/>
</dbReference>
<dbReference type="SABIO-RK" id="Q92536"/>
<dbReference type="SignaLink" id="Q92536"/>
<dbReference type="BioGRID-ORCS" id="9057">
    <property type="hits" value="24 hits in 1156 CRISPR screens"/>
</dbReference>
<dbReference type="ChiTaRS" id="SLC7A6">
    <property type="organism name" value="human"/>
</dbReference>
<dbReference type="GeneWiki" id="SLC7A6"/>
<dbReference type="GenomeRNAi" id="9057"/>
<dbReference type="Pharos" id="Q92536">
    <property type="development level" value="Tbio"/>
</dbReference>
<dbReference type="PRO" id="PR:Q92536"/>
<dbReference type="Proteomes" id="UP000005640">
    <property type="component" value="Chromosome 16"/>
</dbReference>
<dbReference type="RNAct" id="Q92536">
    <property type="molecule type" value="protein"/>
</dbReference>
<dbReference type="Bgee" id="ENSG00000103064">
    <property type="expression patterns" value="Expressed in apex of heart and 171 other cell types or tissues"/>
</dbReference>
<dbReference type="ExpressionAtlas" id="Q92536">
    <property type="expression patterns" value="baseline and differential"/>
</dbReference>
<dbReference type="GO" id="GO:0005886">
    <property type="term" value="C:plasma membrane"/>
    <property type="evidence" value="ECO:0000304"/>
    <property type="project" value="Reactome"/>
</dbReference>
<dbReference type="GO" id="GO:0015171">
    <property type="term" value="F:amino acid transmembrane transporter activity"/>
    <property type="evidence" value="ECO:0000304"/>
    <property type="project" value="ProtInc"/>
</dbReference>
<dbReference type="GO" id="GO:0034618">
    <property type="term" value="F:arginine binding"/>
    <property type="evidence" value="ECO:0000314"/>
    <property type="project" value="UniProtKB"/>
</dbReference>
<dbReference type="GO" id="GO:0015174">
    <property type="term" value="F:basic amino acid transmembrane transporter activity"/>
    <property type="evidence" value="ECO:0000315"/>
    <property type="project" value="ARUK-UCL"/>
</dbReference>
<dbReference type="GO" id="GO:0015179">
    <property type="term" value="F:L-amino acid transmembrane transporter activity"/>
    <property type="evidence" value="ECO:0000318"/>
    <property type="project" value="GO_Central"/>
</dbReference>
<dbReference type="GO" id="GO:0061459">
    <property type="term" value="F:L-arginine transmembrane transporter activity"/>
    <property type="evidence" value="ECO:0000314"/>
    <property type="project" value="UniProtKB"/>
</dbReference>
<dbReference type="GO" id="GO:0106439">
    <property type="term" value="F:L-lysine:L-arginine antiporter activity"/>
    <property type="evidence" value="ECO:0000314"/>
    <property type="project" value="UniProtKB"/>
</dbReference>
<dbReference type="GO" id="GO:0003333">
    <property type="term" value="P:amino acid transmembrane transport"/>
    <property type="evidence" value="ECO:0000318"/>
    <property type="project" value="GO_Central"/>
</dbReference>
<dbReference type="GO" id="GO:0031460">
    <property type="term" value="P:glycine betaine transport"/>
    <property type="evidence" value="ECO:0000250"/>
    <property type="project" value="UniProtKB"/>
</dbReference>
<dbReference type="GO" id="GO:1903826">
    <property type="term" value="P:L-arginine transmembrane transport"/>
    <property type="evidence" value="ECO:0000314"/>
    <property type="project" value="UniProtKB"/>
</dbReference>
<dbReference type="GO" id="GO:0015820">
    <property type="term" value="P:L-leucine transport"/>
    <property type="evidence" value="ECO:0000314"/>
    <property type="project" value="UniProtKB"/>
</dbReference>
<dbReference type="GO" id="GO:0015804">
    <property type="term" value="P:neutral amino acid transport"/>
    <property type="evidence" value="ECO:0000314"/>
    <property type="project" value="UniProtKB"/>
</dbReference>
<dbReference type="GO" id="GO:0006809">
    <property type="term" value="P:nitric oxide biosynthetic process"/>
    <property type="evidence" value="ECO:0000250"/>
    <property type="project" value="UniProtKB"/>
</dbReference>
<dbReference type="GO" id="GO:0015822">
    <property type="term" value="P:ornithine transport"/>
    <property type="evidence" value="ECO:0000315"/>
    <property type="project" value="ARUK-UCL"/>
</dbReference>
<dbReference type="FunFam" id="1.20.1740.10:FF:000003">
    <property type="entry name" value="Y+L amino acid transporter 1 isoform X1"/>
    <property type="match status" value="1"/>
</dbReference>
<dbReference type="Gene3D" id="1.20.1740.10">
    <property type="entry name" value="Amino acid/polyamine transporter I"/>
    <property type="match status" value="1"/>
</dbReference>
<dbReference type="InterPro" id="IPR002293">
    <property type="entry name" value="AA/rel_permease1"/>
</dbReference>
<dbReference type="InterPro" id="IPR050598">
    <property type="entry name" value="AminoAcid_Transporter"/>
</dbReference>
<dbReference type="PANTHER" id="PTHR11785">
    <property type="entry name" value="AMINO ACID TRANSPORTER"/>
    <property type="match status" value="1"/>
</dbReference>
<dbReference type="PANTHER" id="PTHR11785:SF398">
    <property type="entry name" value="Y+L AMINO ACID TRANSPORTER 2"/>
    <property type="match status" value="1"/>
</dbReference>
<dbReference type="Pfam" id="PF13520">
    <property type="entry name" value="AA_permease_2"/>
    <property type="match status" value="1"/>
</dbReference>
<dbReference type="PIRSF" id="PIRSF006060">
    <property type="entry name" value="AA_transporter"/>
    <property type="match status" value="1"/>
</dbReference>
<comment type="function">
    <text evidence="1 2 5 7 9 11 12 13 14 15 16 17">Heterodimer with SLC3A2, that functions as an antiporter which operates as an efflux route by exporting cationic amino acids such as L-arginine from inside the cells in exchange with neutral amino acids like L-leucine, L-glutamine and isoleucine, plus sodium ions and may participate in nitric oxide synthesis (PubMed:10903140, PubMed:11311135, PubMed:14603368, PubMed:15756301, PubMed:16785209, PubMed:17329401, PubMed:19562367, PubMed:31705628, PubMed:9829974). Also exchanges L-arginine with L-lysine in a sodium-independent manner (PubMed:10903140). The transport mechanism is electroneutral and operates with a stoichiometry of 1:1 (PubMed:10903140). Contributes to ammonia-induced increase of L-arginine uptake in cerebral cortical astrocytes leading to ammonia-dependent increase of nitric oxide (NO) production via inducible nitric oxide synthase (iNOS) induction, and protein nitration (By similarity). May mediate transport of ornithine in retinal pigment epithelial (RPE) cells (PubMed:17197568). May also transport glycine betaine in a sodium dependent manner from the cumulus granulosa into the enclosed oocyte (By similarity).</text>
</comment>
<comment type="catalytic activity">
    <reaction evidence="5">
        <text>L-lysine(out) + L-arginine(in) = L-lysine(in) + L-arginine(out)</text>
        <dbReference type="Rhea" id="RHEA:70827"/>
        <dbReference type="ChEBI" id="CHEBI:32551"/>
        <dbReference type="ChEBI" id="CHEBI:32682"/>
    </reaction>
</comment>
<comment type="catalytic activity">
    <reaction evidence="5 12">
        <text>L-leucine(out) + L-arginine(in) + Na(+)(out) = L-leucine(in) + L-arginine(out) + Na(+)(in)</text>
        <dbReference type="Rhea" id="RHEA:70831"/>
        <dbReference type="ChEBI" id="CHEBI:29101"/>
        <dbReference type="ChEBI" id="CHEBI:32682"/>
        <dbReference type="ChEBI" id="CHEBI:57427"/>
    </reaction>
</comment>
<comment type="catalytic activity">
    <reaction evidence="5">
        <text>L-glutamine(out) + L-arginine(in) + Na(+)(out) = L-glutamine(in) + L-arginine(out) + Na(+)(in)</text>
        <dbReference type="Rhea" id="RHEA:70835"/>
        <dbReference type="ChEBI" id="CHEBI:29101"/>
        <dbReference type="ChEBI" id="CHEBI:32682"/>
        <dbReference type="ChEBI" id="CHEBI:58359"/>
    </reaction>
</comment>
<comment type="catalytic activity">
    <reaction evidence="5">
        <text>L-histidine(out) + L-arginine(in) + Na(+)(out) = L-histidine(in) + L-arginine(out) + Na(+)(in)</text>
        <dbReference type="Rhea" id="RHEA:70839"/>
        <dbReference type="ChEBI" id="CHEBI:29101"/>
        <dbReference type="ChEBI" id="CHEBI:32682"/>
        <dbReference type="ChEBI" id="CHEBI:57595"/>
    </reaction>
</comment>
<comment type="catalytic activity">
    <reaction evidence="5">
        <text>L-cysteine(out) + L-arginine(in) + Na(+)(out) = L-cysteine(in) + L-arginine(out) + Na(+)(in)</text>
        <dbReference type="Rhea" id="RHEA:70847"/>
        <dbReference type="ChEBI" id="CHEBI:29101"/>
        <dbReference type="ChEBI" id="CHEBI:32682"/>
        <dbReference type="ChEBI" id="CHEBI:35235"/>
    </reaction>
</comment>
<comment type="catalytic activity">
    <reaction evidence="5">
        <text>L-arginine(in) + L-methionine(out) + Na(+)(out) = L-arginine(out) + L-methionine(in) + Na(+)(in)</text>
        <dbReference type="Rhea" id="RHEA:70843"/>
        <dbReference type="ChEBI" id="CHEBI:29101"/>
        <dbReference type="ChEBI" id="CHEBI:32682"/>
        <dbReference type="ChEBI" id="CHEBI:57844"/>
    </reaction>
</comment>
<comment type="activity regulation">
    <text evidence="5 14">Arginine transport is strongly inhibited by lysine, glutamate, leucine, glutamine, methionine and histidine, in the presence of Na(+) (PubMed:10903140). Also inhibited by protein kinase C (PKC) and treatment with phorbol-12-myristate-13-acetate (PMA) (PubMed:17329401).</text>
</comment>
<comment type="biophysicochemical properties">
    <kinetics>
        <KM evidence="5">295 uM for L-glutamine (in the presence of NaCl)</KM>
        <KM evidence="5">236 uM for L-leucine (in the presence of NaCl)</KM>
        <KM evidence="5">120 uM for L-arginine (in the presence of NaCl)</KM>
        <KM evidence="5">138 uM for L-arginine (in the absence of NaCl)</KM>
        <KM evidence="12">185 uM for L-arginine</KM>
        <KM evidence="12">201 uM for L-leucine</KM>
        <KM evidence="12">5100 uM for sodium ion (in the presence of 100 mM L-leucine and with different sodium ions concentrations.)</KM>
        <KM evidence="16">0.145 uM for L-arginine (in fibroblasts from healthy donors)</KM>
        <Vmax evidence="16">1.479 nmol/min/mg enzyme toward L-arginine (in fibroblasts from healthy donors)</Vmax>
    </kinetics>
</comment>
<comment type="subunit">
    <text evidence="7 12">Disulfide-linked heterodimer with the amino acid transport protein SLC3A2/4F2hc.</text>
</comment>
<comment type="interaction">
    <interactant intactId="EBI-2880595">
        <id>Q92536</id>
    </interactant>
    <interactant intactId="EBI-8645574">
        <id>Q9UPQ8</id>
        <label>DOLK</label>
    </interactant>
    <organismsDiffer>false</organismsDiffer>
    <experiments>3</experiments>
</comment>
<comment type="subcellular location">
    <subcellularLocation>
        <location evidence="12">Cell membrane</location>
        <topology evidence="3">Multi-pass membrane protein</topology>
    </subcellularLocation>
</comment>
<comment type="tissue specificity">
    <text evidence="5 6 8 9 10 13 14 16">Expressed in normal fibroblasts and those from LPI patients (PubMed:11078698). Also expressed in HUVECs, monocytes, RPE cells, and various carcinoma cell lines (PubMed:11742806, PubMed:14603368, PubMed:15280038, PubMed:17197568, PubMed:17329401). Expressed in brain, heart, testis, kidney, small intestine and parotis (PubMed:10903140). Highly expressed in T lymphocytes (PubMed:31705628).</text>
</comment>
<comment type="similarity">
    <text evidence="3">Belongs to the amino acid-polyamine-organocation (APC) superfamily. L-type amino acid transporter (LAT) (TC 2.A.3.8) family.</text>
</comment>
<comment type="sequence caution" evidence="18">
    <conflict type="erroneous initiation">
        <sequence resource="EMBL-CDS" id="BAA13376"/>
    </conflict>
    <text>Extended N-terminus.</text>
</comment>
<reference evidence="20" key="1">
    <citation type="journal article" date="1996" name="DNA Res.">
        <title>Prediction of the coding sequences of unidentified human genes. VI. The coding sequences of 80 new genes (KIAA0201-KIAA0280) deduced by analysis of cDNA clones from cell line KG-1 and brain.</title>
        <authorList>
            <person name="Nagase T."/>
            <person name="Seki N."/>
            <person name="Ishikawa K."/>
            <person name="Ohira M."/>
            <person name="Kawarabayasi Y."/>
            <person name="Ohara O."/>
            <person name="Tanaka A."/>
            <person name="Kotani H."/>
            <person name="Miyajima N."/>
            <person name="Nomura N."/>
        </authorList>
    </citation>
    <scope>NUCLEOTIDE SEQUENCE [LARGE SCALE MRNA]</scope>
    <source>
        <tissue evidence="20">Bone marrow</tissue>
    </source>
</reference>
<reference key="2">
    <citation type="journal article" date="2007" name="BMC Genomics">
        <title>The full-ORF clone resource of the German cDNA consortium.</title>
        <authorList>
            <person name="Bechtel S."/>
            <person name="Rosenfelder H."/>
            <person name="Duda A."/>
            <person name="Schmidt C.P."/>
            <person name="Ernst U."/>
            <person name="Wellenreuther R."/>
            <person name="Mehrle A."/>
            <person name="Schuster C."/>
            <person name="Bahr A."/>
            <person name="Bloecker H."/>
            <person name="Heubner D."/>
            <person name="Hoerlein A."/>
            <person name="Michel G."/>
            <person name="Wedler H."/>
            <person name="Koehrer K."/>
            <person name="Ottenwaelder B."/>
            <person name="Poustka A."/>
            <person name="Wiemann S."/>
            <person name="Schupp I."/>
        </authorList>
    </citation>
    <scope>NUCLEOTIDE SEQUENCE [LARGE SCALE MRNA]</scope>
    <source>
        <tissue>Salivary gland</tissue>
    </source>
</reference>
<reference evidence="21" key="3">
    <citation type="submission" date="2005-07" db="EMBL/GenBank/DDBJ databases">
        <authorList>
            <person name="Mural R.J."/>
            <person name="Istrail S."/>
            <person name="Sutton G.G."/>
            <person name="Florea L."/>
            <person name="Halpern A.L."/>
            <person name="Mobarry C.M."/>
            <person name="Lippert R."/>
            <person name="Walenz B."/>
            <person name="Shatkay H."/>
            <person name="Dew I."/>
            <person name="Miller J.R."/>
            <person name="Flanigan M.J."/>
            <person name="Edwards N.J."/>
            <person name="Bolanos R."/>
            <person name="Fasulo D."/>
            <person name="Halldorsson B.V."/>
            <person name="Hannenhalli S."/>
            <person name="Turner R."/>
            <person name="Yooseph S."/>
            <person name="Lu F."/>
            <person name="Nusskern D.R."/>
            <person name="Shue B.C."/>
            <person name="Zheng X.H."/>
            <person name="Zhong F."/>
            <person name="Delcher A.L."/>
            <person name="Huson D.H."/>
            <person name="Kravitz S.A."/>
            <person name="Mouchard L."/>
            <person name="Reinert K."/>
            <person name="Remington K.A."/>
            <person name="Clark A.G."/>
            <person name="Waterman M.S."/>
            <person name="Eichler E.E."/>
            <person name="Adams M.D."/>
            <person name="Hunkapiller M.W."/>
            <person name="Myers E.W."/>
            <person name="Venter J.C."/>
        </authorList>
    </citation>
    <scope>NUCLEOTIDE SEQUENCE [LARGE SCALE GENOMIC DNA]</scope>
</reference>
<reference evidence="19" key="4">
    <citation type="journal article" date="2004" name="Genome Res.">
        <title>The status, quality, and expansion of the NIH full-length cDNA project: the Mammalian Gene Collection (MGC).</title>
        <authorList>
            <consortium name="The MGC Project Team"/>
        </authorList>
    </citation>
    <scope>NUCLEOTIDE SEQUENCE [LARGE SCALE MRNA]</scope>
    <source>
        <tissue evidence="19">Leukocyte</tissue>
    </source>
</reference>
<reference key="5">
    <citation type="journal article" date="1998" name="J. Biol. Chem.">
        <title>Identification and characterization of a membrane protein (y+L amino acid transporter-1) that associates with 4F2hc to encode the amino acid transport activity y+L. A candidate gene for lysinuric protein intolerance.</title>
        <authorList>
            <person name="Torrents D."/>
            <person name="Estevez R."/>
            <person name="Pineda M."/>
            <person name="Fernandez E."/>
            <person name="Lloberas J."/>
            <person name="Shi Y.-B."/>
            <person name="Zorzano A."/>
            <person name="Palacin M."/>
        </authorList>
    </citation>
    <scope>FUNCTION</scope>
    <source>
        <tissue>Myoblast</tissue>
    </source>
</reference>
<reference evidence="18" key="6">
    <citation type="journal article" date="2000" name="Am. J. Physiol.">
        <title>Arginine transport through system y(+)L in cultured human fibroblasts: normal phenotype of cells from LPI subjects.</title>
        <authorList>
            <person name="Dall'Asta V."/>
            <person name="Bussolati O."/>
            <person name="Sala R."/>
            <person name="Rotoli B.M."/>
            <person name="Sebastio G."/>
            <person name="Sperandeo M.P."/>
            <person name="Andria G."/>
            <person name="Gazzola G.C."/>
        </authorList>
    </citation>
    <scope>TISSUE SPECIFICITY</scope>
</reference>
<reference evidence="18" key="7">
    <citation type="journal article" date="2000" name="Biochem. J.">
        <title>The heterodimeric amino acid transporter 4F2hc/y+LAT2 mediates arginine efflux in exchange with glutamine.</title>
        <authorList>
            <person name="Broeer A."/>
            <person name="Wagner C.A."/>
            <person name="Lang F."/>
            <person name="Broeer S."/>
        </authorList>
    </citation>
    <scope>FUNCTION</scope>
    <scope>TRANSPORTER ACTIVITY</scope>
    <scope>ACTIVITY REGULATION</scope>
    <scope>BIOPHYSICOCHEMICAL PROPERTIES</scope>
    <scope>TISSUE SPECIFICITY</scope>
</reference>
<reference evidence="18" key="8">
    <citation type="journal article" date="2001" name="Biochem. J.">
        <title>Association of 4F2hc with light chains LAT1, LAT2 or y+LAT2 requires different domains.</title>
        <authorList>
            <person name="Broeer A."/>
            <person name="Friedrich B."/>
            <person name="Wagner C.A."/>
            <person name="Fillon S."/>
            <person name="Ganapathy V."/>
            <person name="Lang F."/>
            <person name="Broeer S."/>
        </authorList>
    </citation>
    <scope>FUNCTION</scope>
    <scope>SUBUNIT</scope>
</reference>
<reference evidence="18" key="9">
    <citation type="journal article" date="2002" name="Am. J. Physiol.">
        <title>Two-way arginine transport in human endothelial cells: TNF-alpha stimulation is restricted to system y(+).</title>
        <authorList>
            <person name="Sala R."/>
            <person name="Rotoli B.M."/>
            <person name="Colla E."/>
            <person name="Visigalli R."/>
            <person name="Parolari A."/>
            <person name="Bussolati O."/>
            <person name="Gazzola G.C."/>
            <person name="Dall'Asta V."/>
        </authorList>
    </citation>
    <scope>TISSUE SPECIFICITY</scope>
</reference>
<reference evidence="18" key="10">
    <citation type="journal article" date="2003" name="Exp. Physiol.">
        <title>Nitric oxide synthesis requires activity of the cationic and neutral amino acid transport system y+L in human umbilical vein endothelium.</title>
        <authorList>
            <person name="Arancibia-Garavilla Y."/>
            <person name="Toledo F."/>
            <person name="Casanello P."/>
            <person name="Sobrevia L."/>
        </authorList>
    </citation>
    <scope>FUNCTION</scope>
    <scope>TISSUE SPECIFICITY</scope>
</reference>
<reference evidence="18" key="11">
    <citation type="journal article" date="2004" name="FEBS Lett.">
        <title>INFgamma stimulates arginine transport through system y+L in human monocytes.</title>
        <authorList>
            <person name="Rotoli B.M."/>
            <person name="Bussolati O."/>
            <person name="Sala R."/>
            <person name="Barilli A."/>
            <person name="Talarico E."/>
            <person name="Gazzola G.C."/>
            <person name="Dall'Asta V."/>
        </authorList>
    </citation>
    <scope>TISSUE SPECIFICITY</scope>
</reference>
<reference evidence="18" key="12">
    <citation type="journal article" date="2005" name="Eur. J. Hum. Genet.">
        <title>A y(+)LAT-1 mutant protein interferes with y(+)LAT-2 activity: implications for the molecular pathogenesis of lysinuric protein intolerance.</title>
        <authorList>
            <person name="Sperandeo M.P."/>
            <person name="Paladino S."/>
            <person name="Maiuri L."/>
            <person name="Maroupulos G.D."/>
            <person name="Zurzolo C."/>
            <person name="Taglialatela M."/>
            <person name="Andria G."/>
            <person name="Sebastio G."/>
        </authorList>
    </citation>
    <scope>FUNCTION</scope>
</reference>
<reference evidence="18" key="13">
    <citation type="journal article" date="2006" name="Mol. Membr. Biol.">
        <title>Mutation of the 4F2 heavy-chain carboxy terminus causes y+ LAT2 light-chain dysfunction.</title>
        <authorList>
            <person name="Chubb S."/>
            <person name="Kingsland A.L."/>
            <person name="Broeer A."/>
            <person name="Broeer S."/>
        </authorList>
    </citation>
    <scope>FUNCTION</scope>
    <scope>TRANSPORTER ACTIVITY</scope>
    <scope>BIOPHYSICOCHEMICAL PROPERTIES</scope>
    <scope>SUBUNIT</scope>
    <scope>SUBCELLULAR LOCATION</scope>
    <scope>INHIBITION</scope>
</reference>
<reference evidence="18" key="14">
    <citation type="journal article" date="2007" name="Am. J. Physiol.">
        <title>Activation of classical protein kinase C decreases transport via systems y+ and y+L.</title>
        <authorList>
            <person name="Rotmann A."/>
            <person name="Simon A."/>
            <person name="Martine U."/>
            <person name="Habermeier A."/>
            <person name="Closs E.I."/>
        </authorList>
    </citation>
    <scope>FUNCTION</scope>
    <scope>TISSUE SPECIFICITY</scope>
    <scope>ACTIVITY REGULATION</scope>
</reference>
<reference evidence="18" key="15">
    <citation type="journal article" date="2007" name="Invest. Ophthalmol. Vis. Sci.">
        <title>Ornithine transport via cationic amino acid transporter-1 is involved in ornithine cytotoxicity in retinal pigment epithelial cells.</title>
        <authorList>
            <person name="Kaneko S."/>
            <person name="Ando A."/>
            <person name="Okuda-Ashitaka E."/>
            <person name="Maeda M."/>
            <person name="Furuta K."/>
            <person name="Suzuki M."/>
            <person name="Matsumura M."/>
            <person name="Ito S."/>
        </authorList>
    </citation>
    <scope>FUNCTION</scope>
    <scope>TISSUE SPECIFICITY</scope>
</reference>
<reference key="16">
    <citation type="journal article" date="2009" name="Pflugers Arch.">
        <title>Arginine transport in human erythroid cells: discrimination of CAT1 and 4F2hc/y+LAT2 roles.</title>
        <authorList>
            <person name="Rotoli B.M."/>
            <person name="Closs E.I."/>
            <person name="Barilli A."/>
            <person name="Visigalli R."/>
            <person name="Simon A."/>
            <person name="Habermeier A."/>
            <person name="Bianchi N."/>
            <person name="Gambari R."/>
            <person name="Gazzola G.C."/>
            <person name="Bussolati O."/>
            <person name="Dall'Asta V."/>
        </authorList>
    </citation>
    <scope>FUNCTION</scope>
</reference>
<reference key="17">
    <citation type="journal article" date="2020" name="J. Cell. Mol. Med.">
        <title>y+LAT1 and y+LAT2 contribution to arginine uptake in different human cell models: Implications in the pathophysiology of Lysinuric Protein Intolerance.</title>
        <authorList>
            <person name="Rotoli B.M."/>
            <person name="Barilli A."/>
            <person name="Visigalli R."/>
            <person name="Ferrari F."/>
            <person name="Dall'Asta V."/>
        </authorList>
    </citation>
    <scope>FUNCTION</scope>
    <scope>BIOPHYSICOCHEMICAL PROPERTIES</scope>
    <scope>TISSUE SPECIFICITY</scope>
</reference>
<accession>Q92536</accession>
<accession>Q68DS4</accession>
<accession>Q7L1N3</accession>
<evidence type="ECO:0000250" key="1">
    <source>
        <dbReference type="UniProtKB" id="D3ZMM8"/>
    </source>
</evidence>
<evidence type="ECO:0000250" key="2">
    <source>
        <dbReference type="UniProtKB" id="Q8BGK6"/>
    </source>
</evidence>
<evidence type="ECO:0000255" key="3"/>
<evidence type="ECO:0000256" key="4">
    <source>
        <dbReference type="SAM" id="MobiDB-lite"/>
    </source>
</evidence>
<evidence type="ECO:0000269" key="5">
    <source>
    </source>
</evidence>
<evidence type="ECO:0000269" key="6">
    <source>
    </source>
</evidence>
<evidence type="ECO:0000269" key="7">
    <source>
    </source>
</evidence>
<evidence type="ECO:0000269" key="8">
    <source>
    </source>
</evidence>
<evidence type="ECO:0000269" key="9">
    <source>
    </source>
</evidence>
<evidence type="ECO:0000269" key="10">
    <source>
    </source>
</evidence>
<evidence type="ECO:0000269" key="11">
    <source>
    </source>
</evidence>
<evidence type="ECO:0000269" key="12">
    <source>
    </source>
</evidence>
<evidence type="ECO:0000269" key="13">
    <source>
    </source>
</evidence>
<evidence type="ECO:0000269" key="14">
    <source>
    </source>
</evidence>
<evidence type="ECO:0000269" key="15">
    <source>
    </source>
</evidence>
<evidence type="ECO:0000269" key="16">
    <source>
    </source>
</evidence>
<evidence type="ECO:0000269" key="17">
    <source>
    </source>
</evidence>
<evidence type="ECO:0000305" key="18"/>
<evidence type="ECO:0000312" key="19">
    <source>
        <dbReference type="EMBL" id="AAH28216.1"/>
    </source>
</evidence>
<evidence type="ECO:0000312" key="20">
    <source>
        <dbReference type="EMBL" id="BAA13376.2"/>
    </source>
</evidence>
<evidence type="ECO:0000312" key="21">
    <source>
        <dbReference type="EMBL" id="CAH18146.1"/>
    </source>
</evidence>
<evidence type="ECO:0000312" key="22">
    <source>
        <dbReference type="HGNC" id="HGNC:11064"/>
    </source>
</evidence>
<organism>
    <name type="scientific">Homo sapiens</name>
    <name type="common">Human</name>
    <dbReference type="NCBI Taxonomy" id="9606"/>
    <lineage>
        <taxon>Eukaryota</taxon>
        <taxon>Metazoa</taxon>
        <taxon>Chordata</taxon>
        <taxon>Craniata</taxon>
        <taxon>Vertebrata</taxon>
        <taxon>Euteleostomi</taxon>
        <taxon>Mammalia</taxon>
        <taxon>Eutheria</taxon>
        <taxon>Euarchontoglires</taxon>
        <taxon>Primates</taxon>
        <taxon>Haplorrhini</taxon>
        <taxon>Catarrhini</taxon>
        <taxon>Hominidae</taxon>
        <taxon>Homo</taxon>
    </lineage>
</organism>
<sequence length="515" mass="56828">MEAREPGRPTPTYHLVPNTSQSQVEEDVSSPPQRSSETMQLKKEISLLNGVSLVVGNMIGSGIFVSPKGVLVHTASYGMSLIVWAIGGLFSVVGALCYAELGTTITKSGASYAYILEAFGGFIAFIRLWVSLLVVEPTGQAIIAITFANYIIQPSFPSCDPPYLACRLLAAACICLLTFVNCAYVKWGTRVQDTFTYAKVVALIAIIVMGLVKLCQGHSEHFQDAFEGSSWDMGNLSLALYSALFSYSGWDTLNFVTEEIKNPERNLPLAIGISMPIVTLIYILTNVAYYTVLNISDVLSSDAVAVTFADQTFGMFSWTIPIAVALSCFGGLNASIFASSRLFFVGSREGHLPDLLSMIHIERFTPIPALLFNCTMALIYLIVEDVFQLINYFSFSYWFFVGLSVVGQLYLRWKEPKRPRPLKLSVFFPIVFCICSVFLVIVPLFTDTINSLIGIGIALSGVPFYFMGVYLPESRRPLFIRNVLAAITRGTQQLCFCVLTELDVAEEKKDERKTD</sequence>
<gene>
    <name evidence="22" type="primary">SLC7A6</name>
    <name evidence="20" type="synonym">KIAA0245</name>
</gene>
<feature type="chain" id="PRO_0000341477" description="Y+L amino acid transporter 2">
    <location>
        <begin position="1"/>
        <end position="515"/>
    </location>
</feature>
<feature type="topological domain" description="Cytoplasmic" evidence="3">
    <location>
        <begin position="1"/>
        <end position="44"/>
    </location>
</feature>
<feature type="transmembrane region" description="Helical" evidence="3">
    <location>
        <begin position="45"/>
        <end position="65"/>
    </location>
</feature>
<feature type="topological domain" description="Extracellular" evidence="3">
    <location>
        <begin position="66"/>
        <end position="78"/>
    </location>
</feature>
<feature type="transmembrane region" description="Helical" evidence="3">
    <location>
        <begin position="79"/>
        <end position="99"/>
    </location>
</feature>
<feature type="topological domain" description="Cytoplasmic" evidence="3">
    <location>
        <begin position="100"/>
        <end position="114"/>
    </location>
</feature>
<feature type="transmembrane region" description="Helical" evidence="3">
    <location>
        <begin position="115"/>
        <end position="135"/>
    </location>
</feature>
<feature type="topological domain" description="Extracellular" evidence="3">
    <location>
        <begin position="136"/>
        <end position="167"/>
    </location>
</feature>
<feature type="transmembrane region" description="Helical" evidence="3">
    <location>
        <begin position="168"/>
        <end position="188"/>
    </location>
</feature>
<feature type="topological domain" description="Cytoplasmic" evidence="3">
    <location>
        <begin position="189"/>
        <end position="194"/>
    </location>
</feature>
<feature type="transmembrane region" description="Helical" evidence="3">
    <location>
        <begin position="195"/>
        <end position="215"/>
    </location>
</feature>
<feature type="topological domain" description="Extracellular" evidence="3">
    <location>
        <begin position="216"/>
        <end position="235"/>
    </location>
</feature>
<feature type="transmembrane region" description="Helical" evidence="3">
    <location>
        <begin position="236"/>
        <end position="256"/>
    </location>
</feature>
<feature type="topological domain" description="Cytoplasmic" evidence="3">
    <location>
        <begin position="257"/>
        <end position="266"/>
    </location>
</feature>
<feature type="transmembrane region" description="Helical" evidence="3">
    <location>
        <begin position="267"/>
        <end position="287"/>
    </location>
</feature>
<feature type="topological domain" description="Extracellular" evidence="3">
    <location>
        <begin position="288"/>
        <end position="311"/>
    </location>
</feature>
<feature type="transmembrane region" description="Helical" evidence="3">
    <location>
        <begin position="312"/>
        <end position="332"/>
    </location>
</feature>
<feature type="topological domain" description="Cytoplasmic" evidence="3">
    <location>
        <begin position="333"/>
        <end position="363"/>
    </location>
</feature>
<feature type="transmembrane region" description="Helical" evidence="3">
    <location>
        <begin position="364"/>
        <end position="384"/>
    </location>
</feature>
<feature type="topological domain" description="Extracellular" evidence="3">
    <location>
        <position position="385"/>
    </location>
</feature>
<feature type="transmembrane region" description="Helical" evidence="3">
    <location>
        <begin position="386"/>
        <end position="406"/>
    </location>
</feature>
<feature type="topological domain" description="Cytoplasmic" evidence="3">
    <location>
        <begin position="407"/>
        <end position="425"/>
    </location>
</feature>
<feature type="transmembrane region" description="Helical" evidence="3">
    <location>
        <begin position="426"/>
        <end position="446"/>
    </location>
</feature>
<feature type="topological domain" description="Extracellular" evidence="3">
    <location>
        <begin position="447"/>
        <end position="451"/>
    </location>
</feature>
<feature type="transmembrane region" description="Helical" evidence="3">
    <location>
        <begin position="452"/>
        <end position="472"/>
    </location>
</feature>
<feature type="topological domain" description="Cytoplasmic" evidence="3">
    <location>
        <begin position="473"/>
        <end position="515"/>
    </location>
</feature>
<feature type="region of interest" description="Disordered" evidence="4">
    <location>
        <begin position="1"/>
        <end position="36"/>
    </location>
</feature>
<feature type="modified residue" description="Phosphoserine" evidence="2">
    <location>
        <position position="30"/>
    </location>
</feature>
<feature type="sequence conflict" description="In Ref. 2; CAH18146." evidence="18" ref="2">
    <original>R</original>
    <variation>G</variation>
    <location>
        <position position="8"/>
    </location>
</feature>
<feature type="sequence conflict" description="In Ref. 2; CAH18146." evidence="18" ref="2">
    <original>Q</original>
    <variation>R</variation>
    <location>
        <position position="388"/>
    </location>
</feature>